<evidence type="ECO:0000250" key="1"/>
<evidence type="ECO:0000256" key="2">
    <source>
        <dbReference type="SAM" id="MobiDB-lite"/>
    </source>
</evidence>
<evidence type="ECO:0000305" key="3"/>
<comment type="function">
    <text evidence="1">Involved in the 3-hydroxypropionate cycle used for autotrophic carbon dioxide fixation. Catalyzes the transfer of CoA moiety from succinyl-CoA to L-malate to yield L-malyl-CoA (By similarity).</text>
</comment>
<comment type="catalytic activity">
    <reaction>
        <text>succinyl-CoA + (S)-malate = (S)-malyl-CoA + succinate</text>
        <dbReference type="Rhea" id="RHEA:38255"/>
        <dbReference type="ChEBI" id="CHEBI:15589"/>
        <dbReference type="ChEBI" id="CHEBI:30031"/>
        <dbReference type="ChEBI" id="CHEBI:57292"/>
        <dbReference type="ChEBI" id="CHEBI:57317"/>
        <dbReference type="EC" id="2.8.3.22"/>
    </reaction>
</comment>
<comment type="catalytic activity">
    <reaction>
        <text>(3S)-citramalate + succinyl-CoA = (3S)-citramalyl-CoA + succinate</text>
        <dbReference type="Rhea" id="RHEA:38287"/>
        <dbReference type="ChEBI" id="CHEBI:30031"/>
        <dbReference type="ChEBI" id="CHEBI:30936"/>
        <dbReference type="ChEBI" id="CHEBI:57292"/>
        <dbReference type="ChEBI" id="CHEBI:58668"/>
        <dbReference type="EC" id="2.8.3.22"/>
    </reaction>
</comment>
<comment type="subunit">
    <text evidence="1">Forms a large complex composed of six heterodimers (alpha, beta).</text>
</comment>
<comment type="induction">
    <text evidence="3">Under autotrophic growth conditions.</text>
</comment>
<comment type="similarity">
    <text evidence="3">Belongs to the CoA-transferase III family.</text>
</comment>
<organism>
    <name type="scientific">Chloroflexus aurantiacus (strain ATCC 29366 / DSM 635 / J-10-fl)</name>
    <dbReference type="NCBI Taxonomy" id="324602"/>
    <lineage>
        <taxon>Bacteria</taxon>
        <taxon>Bacillati</taxon>
        <taxon>Chloroflexota</taxon>
        <taxon>Chloroflexia</taxon>
        <taxon>Chloroflexales</taxon>
        <taxon>Chloroflexineae</taxon>
        <taxon>Chloroflexaceae</taxon>
        <taxon>Chloroflexus</taxon>
    </lineage>
</organism>
<proteinExistence type="inferred from homology"/>
<accession>A9WC40</accession>
<dbReference type="EC" id="2.8.3.22"/>
<dbReference type="EMBL" id="CP000909">
    <property type="protein sequence ID" value="ABY33433.1"/>
    <property type="molecule type" value="Genomic_DNA"/>
</dbReference>
<dbReference type="RefSeq" id="WP_012256089.1">
    <property type="nucleotide sequence ID" value="NC_010175.1"/>
</dbReference>
<dbReference type="RefSeq" id="YP_001633822.1">
    <property type="nucleotide sequence ID" value="NC_010175.1"/>
</dbReference>
<dbReference type="SMR" id="A9WC40"/>
<dbReference type="STRING" id="324602.Caur_0179"/>
<dbReference type="EnsemblBacteria" id="ABY33433">
    <property type="protein sequence ID" value="ABY33433"/>
    <property type="gene ID" value="Caur_0179"/>
</dbReference>
<dbReference type="KEGG" id="cau:Caur_0179"/>
<dbReference type="PATRIC" id="fig|324602.8.peg.208"/>
<dbReference type="eggNOG" id="COG1804">
    <property type="taxonomic scope" value="Bacteria"/>
</dbReference>
<dbReference type="HOGENOM" id="CLU_033975_2_0_0"/>
<dbReference type="InParanoid" id="A9WC40"/>
<dbReference type="BioCyc" id="MetaCyc:MONOMER-13599"/>
<dbReference type="Proteomes" id="UP000002008">
    <property type="component" value="Chromosome"/>
</dbReference>
<dbReference type="GO" id="GO:0008410">
    <property type="term" value="F:CoA-transferase activity"/>
    <property type="evidence" value="ECO:0000250"/>
    <property type="project" value="UniProtKB"/>
</dbReference>
<dbReference type="GO" id="GO:0047370">
    <property type="term" value="F:succinate-citramalate CoA-transferase activity"/>
    <property type="evidence" value="ECO:0007669"/>
    <property type="project" value="RHEA"/>
</dbReference>
<dbReference type="GO" id="GO:0043427">
    <property type="term" value="P:carbon fixation by 3-hydroxypropionate cycle"/>
    <property type="evidence" value="ECO:0000250"/>
    <property type="project" value="UniProtKB"/>
</dbReference>
<dbReference type="FunFam" id="3.30.1540.10:FF:000006">
    <property type="entry name" value="Succinyl-CoA--L-malate CoA-transferase beta subunit"/>
    <property type="match status" value="1"/>
</dbReference>
<dbReference type="Gene3D" id="3.40.50.10540">
    <property type="entry name" value="Crotonobetainyl-coa:carnitine coa-transferase, domain 1"/>
    <property type="match status" value="1"/>
</dbReference>
<dbReference type="Gene3D" id="3.30.1540.10">
    <property type="entry name" value="formyl-coa transferase, domain 3"/>
    <property type="match status" value="1"/>
</dbReference>
<dbReference type="InterPro" id="IPR050509">
    <property type="entry name" value="CoA-transferase_III"/>
</dbReference>
<dbReference type="InterPro" id="IPR003673">
    <property type="entry name" value="CoA-Trfase_fam_III"/>
</dbReference>
<dbReference type="InterPro" id="IPR044855">
    <property type="entry name" value="CoA-Trfase_III_dom3_sf"/>
</dbReference>
<dbReference type="InterPro" id="IPR023606">
    <property type="entry name" value="CoA-Trfase_III_dom_1_sf"/>
</dbReference>
<dbReference type="PANTHER" id="PTHR48228:SF6">
    <property type="entry name" value="L-CARNITINE COA-TRANSFERASE"/>
    <property type="match status" value="1"/>
</dbReference>
<dbReference type="PANTHER" id="PTHR48228">
    <property type="entry name" value="SUCCINYL-COA--D-CITRAMALATE COA-TRANSFERASE"/>
    <property type="match status" value="1"/>
</dbReference>
<dbReference type="Pfam" id="PF02515">
    <property type="entry name" value="CoA_transf_3"/>
    <property type="match status" value="1"/>
</dbReference>
<dbReference type="SUPFAM" id="SSF89796">
    <property type="entry name" value="CoA-transferase family III (CaiB/BaiF)"/>
    <property type="match status" value="1"/>
</dbReference>
<keyword id="KW-0120">Carbon dioxide fixation</keyword>
<keyword id="KW-1185">Reference proteome</keyword>
<keyword id="KW-0808">Transferase</keyword>
<feature type="chain" id="PRO_0000429592" description="Succinyl-CoA--L-malate CoA-transferase alpha subunit">
    <location>
        <begin position="1"/>
        <end position="455"/>
    </location>
</feature>
<feature type="region of interest" description="Disordered" evidence="2">
    <location>
        <begin position="1"/>
        <end position="58"/>
    </location>
</feature>
<feature type="compositionally biased region" description="Polar residues" evidence="2">
    <location>
        <begin position="7"/>
        <end position="28"/>
    </location>
</feature>
<feature type="compositionally biased region" description="Polar residues" evidence="2">
    <location>
        <begin position="48"/>
        <end position="58"/>
    </location>
</feature>
<feature type="active site" description="Nucleophile" evidence="1">
    <location>
        <position position="227"/>
    </location>
</feature>
<gene>
    <name type="primary">smtA</name>
    <name type="ordered locus">Caur_0179</name>
</gene>
<protein>
    <recommendedName>
        <fullName>Succinyl-CoA--L-malate CoA-transferase alpha subunit</fullName>
        <ecNumber>2.8.3.22</ecNumber>
    </recommendedName>
</protein>
<name>SMTA_CHLAA</name>
<sequence length="455" mass="49514">MAKASRLTRSTGQPTEVSEGQVTGTSEMPPTGEEPSGHAESKPPASDPMSTPGTGQEQLPLSGIRVIDVGNFLAGPYAASILGEFGAEVLKIEHPLGGDPMRRFGTATARHDATLAWLSEARNRKSVTIDLRQQEGVALFLKLVAKSDILIENFRPGTMEEWGLSWPVLQATNPGLIMLRVSGYGQTGPYRRRSGFAHIAHAFSGLSYLAGFPGETPVLPGTAPLGDYIASLFGAIGILIALRHKEQTGRGQLIDVGIYEAVFRILDEIAPAYGLFGKIREREGAGSFIAVPHGHFRSKDGKWVAIACTTDKMFERLAEAMERPELASPELYGDQRKRLAARDIVNQITIEWVGSLTRDEVMRRCLEKEVPVGPLNSIADMFNDEHFLARGNFACIEAEGIGEVVVPNVIPRLSETPGRVTNLGPPLGNATYEVLRELLDISAEEIKRLRSRKII</sequence>
<reference key="1">
    <citation type="journal article" date="2011" name="BMC Genomics">
        <title>Complete genome sequence of the filamentous anoxygenic phototrophic bacterium Chloroflexus aurantiacus.</title>
        <authorList>
            <person name="Tang K.H."/>
            <person name="Barry K."/>
            <person name="Chertkov O."/>
            <person name="Dalin E."/>
            <person name="Han C.S."/>
            <person name="Hauser L.J."/>
            <person name="Honchak B.M."/>
            <person name="Karbach L.E."/>
            <person name="Land M.L."/>
            <person name="Lapidus A."/>
            <person name="Larimer F.W."/>
            <person name="Mikhailova N."/>
            <person name="Pitluck S."/>
            <person name="Pierson B.K."/>
            <person name="Blankenship R.E."/>
        </authorList>
    </citation>
    <scope>NUCLEOTIDE SEQUENCE [LARGE SCALE GENOMIC DNA]</scope>
    <source>
        <strain>ATCC 29366 / DSM 635 / J-10-fl</strain>
    </source>
</reference>